<proteinExistence type="evidence at transcript level"/>
<comment type="function">
    <text evidence="1 2 5 6">Its target is unknown, but this toxin may modulate voltage-activated calcium channels (Cav) or calcium-dependent potassium channels (KCa).</text>
</comment>
<comment type="subcellular location">
    <subcellularLocation>
        <location evidence="9">Secreted</location>
    </subcellularLocation>
</comment>
<comment type="tissue specificity">
    <text evidence="9">Expressed by the venom duct.</text>
</comment>
<comment type="domain">
    <text evidence="8">The cysteine framework is C-C.</text>
</comment>
<comment type="miscellaneous">
    <text evidence="4">Exists in two forms, due to cis-trans isomerization at 51-Cys-hydroxyPro-52. The cis conformation is the major form.</text>
</comment>
<comment type="similarity">
    <text evidence="8">Belongs to the O2 superfamily. Contryphan family.</text>
</comment>
<feature type="signal peptide" evidence="7">
    <location>
        <begin position="1"/>
        <end position="18"/>
    </location>
</feature>
<feature type="propeptide" id="PRO_0000445139" evidence="8">
    <location>
        <begin position="19"/>
        <end position="47"/>
    </location>
</feature>
<feature type="peptide" id="PRO_5005520251" description="Contryphan-Lnv">
    <location>
        <begin position="48"/>
        <end position="57"/>
    </location>
</feature>
<feature type="modified residue" description="4-hydroxyproline" evidence="3">
    <location>
        <position position="52"/>
    </location>
</feature>
<feature type="modified residue" description="D-tryptophan" evidence="3">
    <location>
        <position position="53"/>
    </location>
</feature>
<feature type="modified residue" description="Cysteine amide" evidence="3">
    <location>
        <position position="57"/>
    </location>
</feature>
<feature type="disulfide bond" evidence="3">
    <location>
        <begin position="51"/>
        <end position="57"/>
    </location>
</feature>
<feature type="non-terminal residue" evidence="10">
    <location>
        <position position="1"/>
    </location>
</feature>
<keyword id="KW-0027">Amidation</keyword>
<keyword id="KW-0208">D-amino acid</keyword>
<keyword id="KW-1015">Disulfide bond</keyword>
<keyword id="KW-0379">Hydroxylation</keyword>
<keyword id="KW-0528">Neurotoxin</keyword>
<keyword id="KW-0964">Secreted</keyword>
<keyword id="KW-0732">Signal</keyword>
<keyword id="KW-0800">Toxin</keyword>
<accession>A0A0K8TU78</accession>
<sequence>ILLLVAAVLLSTQVMVQGDGDQPAYRNAVPRDDNTGGASRKFLNVPRESECPWRPWCG</sequence>
<name>COW_CONLV</name>
<organism>
    <name type="scientific">Conus lenavati</name>
    <name type="common">Cone snail</name>
    <dbReference type="NCBI Taxonomy" id="1519839"/>
    <lineage>
        <taxon>Eukaryota</taxon>
        <taxon>Metazoa</taxon>
        <taxon>Spiralia</taxon>
        <taxon>Lophotrochozoa</taxon>
        <taxon>Mollusca</taxon>
        <taxon>Gastropoda</taxon>
        <taxon>Caenogastropoda</taxon>
        <taxon>Neogastropoda</taxon>
        <taxon>Conoidea</taxon>
        <taxon>Conidae</taxon>
        <taxon>Conus</taxon>
        <taxon>Splinoconus</taxon>
    </lineage>
</organism>
<protein>
    <recommendedName>
        <fullName evidence="8">Contryphan-Lnv</fullName>
    </recommendedName>
</protein>
<reference key="1">
    <citation type="submission" date="2015-04" db="EMBL/GenBank/DDBJ databases">
        <authorList>
            <person name="Syromyatnikov M.Y."/>
            <person name="Popov V.N."/>
        </authorList>
    </citation>
    <scope>NUCLEOTIDE SEQUENCE [MRNA]</scope>
    <source>
        <tissue>Venom duct</tissue>
    </source>
</reference>
<dbReference type="EMBL" id="GCVH01000087">
    <property type="protein sequence ID" value="JAI17806.1"/>
    <property type="molecule type" value="Transcribed_RNA"/>
</dbReference>
<dbReference type="GO" id="GO:0005576">
    <property type="term" value="C:extracellular region"/>
    <property type="evidence" value="ECO:0007669"/>
    <property type="project" value="UniProtKB-SubCell"/>
</dbReference>
<dbReference type="GO" id="GO:0008200">
    <property type="term" value="F:ion channel inhibitor activity"/>
    <property type="evidence" value="ECO:0007669"/>
    <property type="project" value="InterPro"/>
</dbReference>
<dbReference type="GO" id="GO:0090729">
    <property type="term" value="F:toxin activity"/>
    <property type="evidence" value="ECO:0007669"/>
    <property type="project" value="UniProtKB-KW"/>
</dbReference>
<dbReference type="InterPro" id="IPR004214">
    <property type="entry name" value="Conotoxin"/>
</dbReference>
<dbReference type="InterPro" id="IPR011062">
    <property type="entry name" value="Contryphan_CS"/>
</dbReference>
<dbReference type="Pfam" id="PF02950">
    <property type="entry name" value="Conotoxin"/>
    <property type="match status" value="1"/>
</dbReference>
<dbReference type="PROSITE" id="PS60027">
    <property type="entry name" value="CONTRYPHAN"/>
    <property type="match status" value="1"/>
</dbReference>
<evidence type="ECO:0000250" key="1">
    <source>
        <dbReference type="UniProtKB" id="P0C248"/>
    </source>
</evidence>
<evidence type="ECO:0000250" key="2">
    <source>
        <dbReference type="UniProtKB" id="P0C250"/>
    </source>
</evidence>
<evidence type="ECO:0000250" key="3">
    <source>
        <dbReference type="UniProtKB" id="P58786"/>
    </source>
</evidence>
<evidence type="ECO:0000250" key="4">
    <source>
        <dbReference type="UniProtKB" id="P58787"/>
    </source>
</evidence>
<evidence type="ECO:0000250" key="5">
    <source>
        <dbReference type="UniProtKB" id="P62903"/>
    </source>
</evidence>
<evidence type="ECO:0000250" key="6">
    <source>
        <dbReference type="UniProtKB" id="P83047"/>
    </source>
</evidence>
<evidence type="ECO:0000255" key="7"/>
<evidence type="ECO:0000305" key="8"/>
<evidence type="ECO:0000305" key="9">
    <source ref="1"/>
</evidence>
<evidence type="ECO:0000312" key="10">
    <source>
        <dbReference type="EMBL" id="JAI17806.1"/>
    </source>
</evidence>